<protein>
    <recommendedName>
        <fullName evidence="1">Small ribosomal subunit protein bS16</fullName>
    </recommendedName>
    <alternativeName>
        <fullName evidence="2">30S ribosomal protein S16</fullName>
    </alternativeName>
</protein>
<dbReference type="EMBL" id="BA000017">
    <property type="protein sequence ID" value="BAB57400.1"/>
    <property type="molecule type" value="Genomic_DNA"/>
</dbReference>
<dbReference type="RefSeq" id="WP_000268754.1">
    <property type="nucleotide sequence ID" value="NC_002758.2"/>
</dbReference>
<dbReference type="SMR" id="P66439"/>
<dbReference type="DNASU" id="1121215"/>
<dbReference type="GeneID" id="66839430"/>
<dbReference type="KEGG" id="sav:SAV1238"/>
<dbReference type="HOGENOM" id="CLU_100590_5_0_9"/>
<dbReference type="PhylomeDB" id="P66439"/>
<dbReference type="Proteomes" id="UP000002481">
    <property type="component" value="Chromosome"/>
</dbReference>
<dbReference type="GO" id="GO:0005737">
    <property type="term" value="C:cytoplasm"/>
    <property type="evidence" value="ECO:0007669"/>
    <property type="project" value="UniProtKB-ARBA"/>
</dbReference>
<dbReference type="GO" id="GO:0015935">
    <property type="term" value="C:small ribosomal subunit"/>
    <property type="evidence" value="ECO:0007669"/>
    <property type="project" value="TreeGrafter"/>
</dbReference>
<dbReference type="GO" id="GO:0003735">
    <property type="term" value="F:structural constituent of ribosome"/>
    <property type="evidence" value="ECO:0007669"/>
    <property type="project" value="InterPro"/>
</dbReference>
<dbReference type="GO" id="GO:0006412">
    <property type="term" value="P:translation"/>
    <property type="evidence" value="ECO:0007669"/>
    <property type="project" value="UniProtKB-UniRule"/>
</dbReference>
<dbReference type="FunFam" id="3.30.1320.10:FF:000002">
    <property type="entry name" value="30S ribosomal protein S16"/>
    <property type="match status" value="1"/>
</dbReference>
<dbReference type="Gene3D" id="3.30.1320.10">
    <property type="match status" value="1"/>
</dbReference>
<dbReference type="HAMAP" id="MF_00385">
    <property type="entry name" value="Ribosomal_bS16"/>
    <property type="match status" value="1"/>
</dbReference>
<dbReference type="InterPro" id="IPR000307">
    <property type="entry name" value="Ribosomal_bS16"/>
</dbReference>
<dbReference type="InterPro" id="IPR023803">
    <property type="entry name" value="Ribosomal_bS16_dom_sf"/>
</dbReference>
<dbReference type="NCBIfam" id="TIGR00002">
    <property type="entry name" value="S16"/>
    <property type="match status" value="1"/>
</dbReference>
<dbReference type="PANTHER" id="PTHR12919">
    <property type="entry name" value="30S RIBOSOMAL PROTEIN S16"/>
    <property type="match status" value="1"/>
</dbReference>
<dbReference type="PANTHER" id="PTHR12919:SF20">
    <property type="entry name" value="SMALL RIBOSOMAL SUBUNIT PROTEIN BS16M"/>
    <property type="match status" value="1"/>
</dbReference>
<dbReference type="Pfam" id="PF00886">
    <property type="entry name" value="Ribosomal_S16"/>
    <property type="match status" value="1"/>
</dbReference>
<dbReference type="SUPFAM" id="SSF54565">
    <property type="entry name" value="Ribosomal protein S16"/>
    <property type="match status" value="1"/>
</dbReference>
<accession>P66439</accession>
<accession>Q99UN2</accession>
<organism>
    <name type="scientific">Staphylococcus aureus (strain Mu50 / ATCC 700699)</name>
    <dbReference type="NCBI Taxonomy" id="158878"/>
    <lineage>
        <taxon>Bacteria</taxon>
        <taxon>Bacillati</taxon>
        <taxon>Bacillota</taxon>
        <taxon>Bacilli</taxon>
        <taxon>Bacillales</taxon>
        <taxon>Staphylococcaceae</taxon>
        <taxon>Staphylococcus</taxon>
    </lineage>
</organism>
<comment type="similarity">
    <text evidence="1">Belongs to the bacterial ribosomal protein bS16 family.</text>
</comment>
<proteinExistence type="inferred from homology"/>
<sequence length="91" mass="10235">MAVKIRLTRLGSKRNPFYRIVVADARSPRDGRIIEQIGTYNPTSANAPEIKVDEALALKWLNDGAKPTDTVHNILSKEGIMKKFDEQKKAK</sequence>
<keyword id="KW-0687">Ribonucleoprotein</keyword>
<keyword id="KW-0689">Ribosomal protein</keyword>
<reference key="1">
    <citation type="journal article" date="2001" name="Lancet">
        <title>Whole genome sequencing of meticillin-resistant Staphylococcus aureus.</title>
        <authorList>
            <person name="Kuroda M."/>
            <person name="Ohta T."/>
            <person name="Uchiyama I."/>
            <person name="Baba T."/>
            <person name="Yuzawa H."/>
            <person name="Kobayashi I."/>
            <person name="Cui L."/>
            <person name="Oguchi A."/>
            <person name="Aoki K."/>
            <person name="Nagai Y."/>
            <person name="Lian J.-Q."/>
            <person name="Ito T."/>
            <person name="Kanamori M."/>
            <person name="Matsumaru H."/>
            <person name="Maruyama A."/>
            <person name="Murakami H."/>
            <person name="Hosoyama A."/>
            <person name="Mizutani-Ui Y."/>
            <person name="Takahashi N.K."/>
            <person name="Sawano T."/>
            <person name="Inoue R."/>
            <person name="Kaito C."/>
            <person name="Sekimizu K."/>
            <person name="Hirakawa H."/>
            <person name="Kuhara S."/>
            <person name="Goto S."/>
            <person name="Yabuzaki J."/>
            <person name="Kanehisa M."/>
            <person name="Yamashita A."/>
            <person name="Oshima K."/>
            <person name="Furuya K."/>
            <person name="Yoshino C."/>
            <person name="Shiba T."/>
            <person name="Hattori M."/>
            <person name="Ogasawara N."/>
            <person name="Hayashi H."/>
            <person name="Hiramatsu K."/>
        </authorList>
    </citation>
    <scope>NUCLEOTIDE SEQUENCE [LARGE SCALE GENOMIC DNA]</scope>
    <source>
        <strain>Mu50 / ATCC 700699</strain>
    </source>
</reference>
<evidence type="ECO:0000255" key="1">
    <source>
        <dbReference type="HAMAP-Rule" id="MF_00385"/>
    </source>
</evidence>
<evidence type="ECO:0000305" key="2"/>
<name>RS16_STAAM</name>
<gene>
    <name evidence="1" type="primary">rpsP</name>
    <name type="ordered locus">SAV1238</name>
</gene>
<feature type="chain" id="PRO_0000167242" description="Small ribosomal subunit protein bS16">
    <location>
        <begin position="1"/>
        <end position="91"/>
    </location>
</feature>